<keyword id="KW-0025">Alternative splicing</keyword>
<keyword id="KW-1003">Cell membrane</keyword>
<keyword id="KW-1015">Disulfide bond</keyword>
<keyword id="KW-0325">Glycoprotein</keyword>
<keyword id="KW-0472">Membrane</keyword>
<keyword id="KW-0597">Phosphoprotein</keyword>
<keyword id="KW-1185">Reference proteome</keyword>
<keyword id="KW-0812">Transmembrane</keyword>
<keyword id="KW-1133">Transmembrane helix</keyword>
<keyword id="KW-0813">Transport</keyword>
<proteinExistence type="evidence at protein level"/>
<dbReference type="EMBL" id="AK009850">
    <property type="protein sequence ID" value="BAB26542.1"/>
    <property type="molecule type" value="mRNA"/>
</dbReference>
<dbReference type="EMBL" id="AK029091">
    <property type="protein sequence ID" value="BAC26290.1"/>
    <property type="molecule type" value="mRNA"/>
</dbReference>
<dbReference type="EMBL" id="AK154970">
    <property type="protein sequence ID" value="BAE32962.1"/>
    <property type="molecule type" value="mRNA"/>
</dbReference>
<dbReference type="EMBL" id="AK170158">
    <property type="protein sequence ID" value="BAE41605.1"/>
    <property type="molecule type" value="mRNA"/>
</dbReference>
<dbReference type="EMBL" id="AL845161">
    <property type="status" value="NOT_ANNOTATED_CDS"/>
    <property type="molecule type" value="Genomic_DNA"/>
</dbReference>
<dbReference type="EMBL" id="CH466551">
    <property type="protein sequence ID" value="EDL05945.1"/>
    <property type="molecule type" value="Genomic_DNA"/>
</dbReference>
<dbReference type="EMBL" id="BC016127">
    <property type="protein sequence ID" value="AAH16127.1"/>
    <property type="molecule type" value="mRNA"/>
</dbReference>
<dbReference type="CCDS" id="CCDS16876.1">
    <molecule id="Q9D6X5-1"/>
</dbReference>
<dbReference type="CCDS" id="CCDS50749.1">
    <molecule id="Q9D6X5-2"/>
</dbReference>
<dbReference type="RefSeq" id="NP_001158291.1">
    <molecule id="Q9D6X5-1"/>
    <property type="nucleotide sequence ID" value="NM_001164819.2"/>
</dbReference>
<dbReference type="RefSeq" id="NP_001158292.1">
    <molecule id="Q9D6X5-2"/>
    <property type="nucleotide sequence ID" value="NM_001164820.2"/>
</dbReference>
<dbReference type="RefSeq" id="NP_001421004.1">
    <molecule id="Q9D6X5-2"/>
    <property type="nucleotide sequence ID" value="NM_001434075.1"/>
</dbReference>
<dbReference type="RefSeq" id="NP_081448.2">
    <molecule id="Q9D6X5-1"/>
    <property type="nucleotide sequence ID" value="NM_027172.4"/>
</dbReference>
<dbReference type="SMR" id="Q9D6X5"/>
<dbReference type="BioGRID" id="213623">
    <property type="interactions" value="1"/>
</dbReference>
<dbReference type="FunCoup" id="Q9D6X5">
    <property type="interactions" value="1012"/>
</dbReference>
<dbReference type="IntAct" id="Q9D6X5">
    <property type="interactions" value="1"/>
</dbReference>
<dbReference type="MINT" id="Q9D6X5"/>
<dbReference type="STRING" id="10090.ENSMUSP00000072961"/>
<dbReference type="GlyCosmos" id="Q9D6X5">
    <property type="glycosylation" value="2 sites, No reported glycans"/>
</dbReference>
<dbReference type="GlyGen" id="Q9D6X5">
    <property type="glycosylation" value="2 sites"/>
</dbReference>
<dbReference type="iPTMnet" id="Q9D6X5"/>
<dbReference type="PhosphoSitePlus" id="Q9D6X5"/>
<dbReference type="SwissPalm" id="Q9D6X5"/>
<dbReference type="PaxDb" id="10090-ENSMUSP00000072961"/>
<dbReference type="PeptideAtlas" id="Q9D6X5"/>
<dbReference type="ProteomicsDB" id="260799">
    <molecule id="Q9D6X5-1"/>
</dbReference>
<dbReference type="Antibodypedia" id="54121">
    <property type="antibodies" value="60 antibodies from 15 providers"/>
</dbReference>
<dbReference type="DNASU" id="69698"/>
<dbReference type="Ensembl" id="ENSMUST00000073228.12">
    <molecule id="Q9D6X5-1"/>
    <property type="protein sequence ID" value="ENSMUSP00000072961.6"/>
    <property type="gene ID" value="ENSMUSG00000027463.15"/>
</dbReference>
<dbReference type="Ensembl" id="ENSMUST00000109858.2">
    <molecule id="Q9D6X5-2"/>
    <property type="protein sequence ID" value="ENSMUSP00000105484.2"/>
    <property type="gene ID" value="ENSMUSG00000027463.15"/>
</dbReference>
<dbReference type="Ensembl" id="ENSMUST00000109859.9">
    <molecule id="Q9D6X5-2"/>
    <property type="protein sequence ID" value="ENSMUSP00000105485.3"/>
    <property type="gene ID" value="ENSMUSG00000027463.15"/>
</dbReference>
<dbReference type="Ensembl" id="ENSMUST00000109861.8">
    <molecule id="Q9D6X5-1"/>
    <property type="protein sequence ID" value="ENSMUSP00000105487.2"/>
    <property type="gene ID" value="ENSMUSG00000027463.15"/>
</dbReference>
<dbReference type="GeneID" id="69698"/>
<dbReference type="KEGG" id="mmu:69698"/>
<dbReference type="UCSC" id="uc008neu.2">
    <molecule id="Q9D6X5-1"/>
    <property type="organism name" value="mouse"/>
</dbReference>
<dbReference type="UCSC" id="uc012cga.1">
    <molecule id="Q9D6X5-2"/>
    <property type="organism name" value="mouse"/>
</dbReference>
<dbReference type="AGR" id="MGI:1916948"/>
<dbReference type="CTD" id="113278"/>
<dbReference type="MGI" id="MGI:1916948">
    <property type="gene designation" value="Slc52a3"/>
</dbReference>
<dbReference type="VEuPathDB" id="HostDB:ENSMUSG00000027463"/>
<dbReference type="eggNOG" id="KOG4255">
    <property type="taxonomic scope" value="Eukaryota"/>
</dbReference>
<dbReference type="GeneTree" id="ENSGT00390000003774"/>
<dbReference type="HOGENOM" id="CLU_1111093_0_0_1"/>
<dbReference type="InParanoid" id="Q9D6X5"/>
<dbReference type="OMA" id="CGAAAQM"/>
<dbReference type="OrthoDB" id="9995836at2759"/>
<dbReference type="PhylomeDB" id="Q9D6X5"/>
<dbReference type="TreeFam" id="TF314820"/>
<dbReference type="Reactome" id="R-MMU-196843">
    <property type="pathway name" value="Vitamin B2 (riboflavin) metabolism"/>
</dbReference>
<dbReference type="BioGRID-ORCS" id="69698">
    <property type="hits" value="2 hits in 76 CRISPR screens"/>
</dbReference>
<dbReference type="PRO" id="PR:Q9D6X5"/>
<dbReference type="Proteomes" id="UP000000589">
    <property type="component" value="Chromosome 2"/>
</dbReference>
<dbReference type="RNAct" id="Q9D6X5">
    <property type="molecule type" value="protein"/>
</dbReference>
<dbReference type="Bgee" id="ENSMUSG00000027463">
    <property type="expression patterns" value="Expressed in intestinal villus and 141 other cell types or tissues"/>
</dbReference>
<dbReference type="GO" id="GO:0005886">
    <property type="term" value="C:plasma membrane"/>
    <property type="evidence" value="ECO:0000315"/>
    <property type="project" value="MGI"/>
</dbReference>
<dbReference type="GO" id="GO:0032217">
    <property type="term" value="F:riboflavin transmembrane transporter activity"/>
    <property type="evidence" value="ECO:0000315"/>
    <property type="project" value="MGI"/>
</dbReference>
<dbReference type="GO" id="GO:0034605">
    <property type="term" value="P:cellular response to heat"/>
    <property type="evidence" value="ECO:0000314"/>
    <property type="project" value="MGI"/>
</dbReference>
<dbReference type="GO" id="GO:0072388">
    <property type="term" value="P:flavin adenine dinucleotide biosynthetic process"/>
    <property type="evidence" value="ECO:0000315"/>
    <property type="project" value="MGI"/>
</dbReference>
<dbReference type="GO" id="GO:0006771">
    <property type="term" value="P:riboflavin metabolic process"/>
    <property type="evidence" value="ECO:0000315"/>
    <property type="project" value="MGI"/>
</dbReference>
<dbReference type="GO" id="GO:0032218">
    <property type="term" value="P:riboflavin transport"/>
    <property type="evidence" value="ECO:0000250"/>
    <property type="project" value="UniProtKB"/>
</dbReference>
<dbReference type="GO" id="GO:0007605">
    <property type="term" value="P:sensory perception of sound"/>
    <property type="evidence" value="ECO:0000250"/>
    <property type="project" value="UniProtKB"/>
</dbReference>
<dbReference type="InterPro" id="IPR009357">
    <property type="entry name" value="Riboflavin_transptr"/>
</dbReference>
<dbReference type="PANTHER" id="PTHR12929">
    <property type="entry name" value="SOLUTE CARRIER FAMILY 52"/>
    <property type="match status" value="1"/>
</dbReference>
<dbReference type="PANTHER" id="PTHR12929:SF4">
    <property type="entry name" value="SOLUTE CARRIER FAMILY 52, RIBOFLAVIN TRANSPORTER, MEMBER 3"/>
    <property type="match status" value="1"/>
</dbReference>
<dbReference type="Pfam" id="PF06237">
    <property type="entry name" value="SLC52_ribofla_tr"/>
    <property type="match status" value="1"/>
</dbReference>
<evidence type="ECO:0000250" key="1">
    <source>
        <dbReference type="UniProtKB" id="Q4FZU9"/>
    </source>
</evidence>
<evidence type="ECO:0000250" key="2">
    <source>
        <dbReference type="UniProtKB" id="Q9NQ40"/>
    </source>
</evidence>
<evidence type="ECO:0000255" key="3"/>
<evidence type="ECO:0000269" key="4">
    <source>
    </source>
</evidence>
<evidence type="ECO:0000303" key="5">
    <source>
    </source>
</evidence>
<evidence type="ECO:0000305" key="6"/>
<evidence type="ECO:0007744" key="7">
    <source>
    </source>
</evidence>
<organism>
    <name type="scientific">Mus musculus</name>
    <name type="common">Mouse</name>
    <dbReference type="NCBI Taxonomy" id="10090"/>
    <lineage>
        <taxon>Eukaryota</taxon>
        <taxon>Metazoa</taxon>
        <taxon>Chordata</taxon>
        <taxon>Craniata</taxon>
        <taxon>Vertebrata</taxon>
        <taxon>Euteleostomi</taxon>
        <taxon>Mammalia</taxon>
        <taxon>Eutheria</taxon>
        <taxon>Euarchontoglires</taxon>
        <taxon>Glires</taxon>
        <taxon>Rodentia</taxon>
        <taxon>Myomorpha</taxon>
        <taxon>Muroidea</taxon>
        <taxon>Muridae</taxon>
        <taxon>Murinae</taxon>
        <taxon>Mus</taxon>
        <taxon>Mus</taxon>
    </lineage>
</organism>
<feature type="chain" id="PRO_0000042637" description="Solute carrier family 52, riboflavin transporter, member 3">
    <location>
        <begin position="1"/>
        <end position="460"/>
    </location>
</feature>
<feature type="topological domain" description="Cytoplasmic" evidence="3">
    <location>
        <begin position="1"/>
        <end position="6"/>
    </location>
</feature>
<feature type="transmembrane region" description="Helical" evidence="3">
    <location>
        <begin position="7"/>
        <end position="27"/>
    </location>
</feature>
<feature type="topological domain" description="Extracellular" evidence="3">
    <location>
        <begin position="28"/>
        <end position="37"/>
    </location>
</feature>
<feature type="transmembrane region" description="Helical" evidence="3">
    <location>
        <begin position="38"/>
        <end position="58"/>
    </location>
</feature>
<feature type="topological domain" description="Cytoplasmic" evidence="3">
    <location>
        <begin position="59"/>
        <end position="71"/>
    </location>
</feature>
<feature type="transmembrane region" description="Helical" evidence="3">
    <location>
        <begin position="72"/>
        <end position="92"/>
    </location>
</feature>
<feature type="topological domain" description="Extracellular" evidence="3">
    <location>
        <begin position="93"/>
        <end position="105"/>
    </location>
</feature>
<feature type="transmembrane region" description="Helical" evidence="3">
    <location>
        <begin position="106"/>
        <end position="126"/>
    </location>
</feature>
<feature type="topological domain" description="Cytoplasmic" evidence="3">
    <location>
        <begin position="127"/>
        <end position="137"/>
    </location>
</feature>
<feature type="transmembrane region" description="Helical" evidence="3">
    <location>
        <begin position="138"/>
        <end position="158"/>
    </location>
</feature>
<feature type="topological domain" description="Extracellular" evidence="3">
    <location>
        <begin position="159"/>
        <end position="211"/>
    </location>
</feature>
<feature type="transmembrane region" description="Helical" evidence="3">
    <location>
        <begin position="212"/>
        <end position="232"/>
    </location>
</feature>
<feature type="topological domain" description="Cytoplasmic" evidence="3">
    <location>
        <begin position="233"/>
        <end position="291"/>
    </location>
</feature>
<feature type="transmembrane region" description="Helical" evidence="3">
    <location>
        <begin position="292"/>
        <end position="312"/>
    </location>
</feature>
<feature type="topological domain" description="Extracellular" evidence="3">
    <location>
        <begin position="313"/>
        <end position="326"/>
    </location>
</feature>
<feature type="transmembrane region" description="Helical" evidence="3">
    <location>
        <begin position="327"/>
        <end position="347"/>
    </location>
</feature>
<feature type="topological domain" description="Cytoplasmic" evidence="3">
    <location>
        <begin position="348"/>
        <end position="350"/>
    </location>
</feature>
<feature type="transmembrane region" description="Helical" evidence="3">
    <location>
        <begin position="351"/>
        <end position="371"/>
    </location>
</feature>
<feature type="topological domain" description="Extracellular" evidence="3">
    <location>
        <begin position="372"/>
        <end position="387"/>
    </location>
</feature>
<feature type="transmembrane region" description="Helical" evidence="3">
    <location>
        <begin position="388"/>
        <end position="408"/>
    </location>
</feature>
<feature type="topological domain" description="Cytoplasmic" evidence="3">
    <location>
        <begin position="409"/>
        <end position="418"/>
    </location>
</feature>
<feature type="transmembrane region" description="Helical" evidence="3">
    <location>
        <begin position="419"/>
        <end position="439"/>
    </location>
</feature>
<feature type="topological domain" description="Extracellular" evidence="3">
    <location>
        <begin position="440"/>
        <end position="460"/>
    </location>
</feature>
<feature type="modified residue" description="Phosphoserine" evidence="1">
    <location>
        <position position="242"/>
    </location>
</feature>
<feature type="modified residue" description="Phosphoserine" evidence="7">
    <location>
        <position position="266"/>
    </location>
</feature>
<feature type="glycosylation site" description="N-linked (GlcNAc...) asparagine" evidence="3">
    <location>
        <position position="94"/>
    </location>
</feature>
<feature type="glycosylation site" description="N-linked (GlcNAc...) asparagine" evidence="3">
    <location>
        <position position="168"/>
    </location>
</feature>
<feature type="disulfide bond" evidence="2">
    <location>
        <begin position="377"/>
        <end position="454"/>
    </location>
</feature>
<feature type="splice variant" id="VSP_003816" description="In isoform 2." evidence="5">
    <original>GNLSPSLPSPSWHQESRYLAPRFSPLLFFLLLSFLTGCCLVAFFLLQRQPWGRQGSIEDLLHSQ</original>
    <variation>VAVIPGGAHSVGDRLWGLQYGHGCYEPLPCPAGSLGWRSPYRALLGAVCSLSQLCQGDAGCDLA</variation>
    <location>
        <begin position="187"/>
        <end position="250"/>
    </location>
</feature>
<feature type="splice variant" id="VSP_003817" description="In isoform 2." evidence="5">
    <location>
        <begin position="251"/>
        <end position="460"/>
    </location>
</feature>
<feature type="sequence conflict" description="In Ref. 1; BAE41605." evidence="6" ref="1">
    <original>V</original>
    <variation>L</variation>
    <location>
        <position position="81"/>
    </location>
</feature>
<feature type="sequence conflict" description="In Ref. 1; BAB26542." evidence="6" ref="1">
    <original>T</original>
    <variation>N</variation>
    <location>
        <position position="182"/>
    </location>
</feature>
<feature type="sequence conflict" description="In Ref. 1; BAE41605." evidence="6" ref="1">
    <original>S</original>
    <variation>P</variation>
    <location>
        <position position="195"/>
    </location>
</feature>
<feature type="sequence conflict" description="In Ref. 1; BAB26542." evidence="6" ref="1">
    <original>G</original>
    <variation>C</variation>
    <location>
        <position position="223"/>
    </location>
</feature>
<feature type="sequence conflict" description="In Ref. 1; BAE41605." evidence="6" ref="1">
    <original>L</original>
    <variation>I</variation>
    <location>
        <position position="286"/>
    </location>
</feature>
<comment type="function">
    <text evidence="2">Plasma membrane transporter mediating the uptake by cells of the water soluble vitamin B2/riboflavin that plays a key role in biochemical oxidation-reduction reactions of the carbohydrate, lipid, and amino acid metabolism.</text>
</comment>
<comment type="catalytic activity">
    <reaction evidence="2">
        <text>riboflavin(in) = riboflavin(out)</text>
        <dbReference type="Rhea" id="RHEA:35015"/>
        <dbReference type="ChEBI" id="CHEBI:57986"/>
    </reaction>
</comment>
<comment type="subcellular location">
    <subcellularLocation>
        <location evidence="2">Cell membrane</location>
        <topology evidence="3">Multi-pass membrane protein</topology>
    </subcellularLocation>
</comment>
<comment type="alternative products">
    <event type="alternative splicing"/>
    <isoform>
        <id>Q9D6X5-1</id>
        <name>1</name>
        <sequence type="displayed"/>
    </isoform>
    <isoform>
        <id>Q9D6X5-2</id>
        <name>2</name>
        <sequence type="described" ref="VSP_003816 VSP_003817"/>
    </isoform>
</comment>
<comment type="tissue specificity">
    <text evidence="4">Within the small intestine, it is particularly expressed in the jujenum and the ileum. Almost negligible expression in the stomach, duodenum, and large intestine.</text>
</comment>
<comment type="similarity">
    <text evidence="6">Belongs to the riboflavin transporter family.</text>
</comment>
<accession>Q9D6X5</accession>
<accession>A2AQU3</accession>
<accession>Q3TDJ6</accession>
<accession>Q3U328</accession>
<accession>Q8CE36</accession>
<accession>Q91WB9</accession>
<gene>
    <name type="primary">Slc52a3</name>
    <name type="synonym">Rft2</name>
    <name type="synonym">RFVT3</name>
</gene>
<sequence>MAFLTHLLVCVFGMGSWVAINGLWVELPLLVTELPEAWYLPSYLTVVIQLANIGPLLVTLMHRFRPGCLSEVPVIFLILCVGTAACILLAFLWNVTSWIQGGQHSVAFIVLTFFLALVDCTSSVTFLPFMSQLPTYYLTTFFIGEGLSGLLPALVALVQGSGITTCVNVTETPGTTLNTMETPITQGNLSPSLPSPSWHQESRYLAPRFSPLLFFLLLSFLTGCCLVAFFLLQRQPWGRQGSIEDLLHSQVTLHSIRPRDTEDTSSLGAPVSSPGKGSVEASVASLRPAQLAFIYSVVAFVNALTNGVLPSVQTYSCLPYGPVAYHLSATLSSVASPLACFLPIFLPNRSLLFLGVLTVLGTGFGAYNMAMAAMSPCPVLQGHWGGEVLIVLSWVLFAACLSYVKVMLGVILRDRSRSALLWCGAAVQLGSLIGALLMFPLVNVLKLFSSADYCSLDCSV</sequence>
<protein>
    <recommendedName>
        <fullName>Solute carrier family 52, riboflavin transporter, member 3</fullName>
    </recommendedName>
    <alternativeName>
        <fullName>Riboflavin transporter 2</fullName>
        <shortName>RFT2</shortName>
    </alternativeName>
</protein>
<name>S52A3_MOUSE</name>
<reference key="1">
    <citation type="journal article" date="2005" name="Science">
        <title>The transcriptional landscape of the mammalian genome.</title>
        <authorList>
            <person name="Carninci P."/>
            <person name="Kasukawa T."/>
            <person name="Katayama S."/>
            <person name="Gough J."/>
            <person name="Frith M.C."/>
            <person name="Maeda N."/>
            <person name="Oyama R."/>
            <person name="Ravasi T."/>
            <person name="Lenhard B."/>
            <person name="Wells C."/>
            <person name="Kodzius R."/>
            <person name="Shimokawa K."/>
            <person name="Bajic V.B."/>
            <person name="Brenner S.E."/>
            <person name="Batalov S."/>
            <person name="Forrest A.R."/>
            <person name="Zavolan M."/>
            <person name="Davis M.J."/>
            <person name="Wilming L.G."/>
            <person name="Aidinis V."/>
            <person name="Allen J.E."/>
            <person name="Ambesi-Impiombato A."/>
            <person name="Apweiler R."/>
            <person name="Aturaliya R.N."/>
            <person name="Bailey T.L."/>
            <person name="Bansal M."/>
            <person name="Baxter L."/>
            <person name="Beisel K.W."/>
            <person name="Bersano T."/>
            <person name="Bono H."/>
            <person name="Chalk A.M."/>
            <person name="Chiu K.P."/>
            <person name="Choudhary V."/>
            <person name="Christoffels A."/>
            <person name="Clutterbuck D.R."/>
            <person name="Crowe M.L."/>
            <person name="Dalla E."/>
            <person name="Dalrymple B.P."/>
            <person name="de Bono B."/>
            <person name="Della Gatta G."/>
            <person name="di Bernardo D."/>
            <person name="Down T."/>
            <person name="Engstrom P."/>
            <person name="Fagiolini M."/>
            <person name="Faulkner G."/>
            <person name="Fletcher C.F."/>
            <person name="Fukushima T."/>
            <person name="Furuno M."/>
            <person name="Futaki S."/>
            <person name="Gariboldi M."/>
            <person name="Georgii-Hemming P."/>
            <person name="Gingeras T.R."/>
            <person name="Gojobori T."/>
            <person name="Green R.E."/>
            <person name="Gustincich S."/>
            <person name="Harbers M."/>
            <person name="Hayashi Y."/>
            <person name="Hensch T.K."/>
            <person name="Hirokawa N."/>
            <person name="Hill D."/>
            <person name="Huminiecki L."/>
            <person name="Iacono M."/>
            <person name="Ikeo K."/>
            <person name="Iwama A."/>
            <person name="Ishikawa T."/>
            <person name="Jakt M."/>
            <person name="Kanapin A."/>
            <person name="Katoh M."/>
            <person name="Kawasawa Y."/>
            <person name="Kelso J."/>
            <person name="Kitamura H."/>
            <person name="Kitano H."/>
            <person name="Kollias G."/>
            <person name="Krishnan S.P."/>
            <person name="Kruger A."/>
            <person name="Kummerfeld S.K."/>
            <person name="Kurochkin I.V."/>
            <person name="Lareau L.F."/>
            <person name="Lazarevic D."/>
            <person name="Lipovich L."/>
            <person name="Liu J."/>
            <person name="Liuni S."/>
            <person name="McWilliam S."/>
            <person name="Madan Babu M."/>
            <person name="Madera M."/>
            <person name="Marchionni L."/>
            <person name="Matsuda H."/>
            <person name="Matsuzawa S."/>
            <person name="Miki H."/>
            <person name="Mignone F."/>
            <person name="Miyake S."/>
            <person name="Morris K."/>
            <person name="Mottagui-Tabar S."/>
            <person name="Mulder N."/>
            <person name="Nakano N."/>
            <person name="Nakauchi H."/>
            <person name="Ng P."/>
            <person name="Nilsson R."/>
            <person name="Nishiguchi S."/>
            <person name="Nishikawa S."/>
            <person name="Nori F."/>
            <person name="Ohara O."/>
            <person name="Okazaki Y."/>
            <person name="Orlando V."/>
            <person name="Pang K.C."/>
            <person name="Pavan W.J."/>
            <person name="Pavesi G."/>
            <person name="Pesole G."/>
            <person name="Petrovsky N."/>
            <person name="Piazza S."/>
            <person name="Reed J."/>
            <person name="Reid J.F."/>
            <person name="Ring B.Z."/>
            <person name="Ringwald M."/>
            <person name="Rost B."/>
            <person name="Ruan Y."/>
            <person name="Salzberg S.L."/>
            <person name="Sandelin A."/>
            <person name="Schneider C."/>
            <person name="Schoenbach C."/>
            <person name="Sekiguchi K."/>
            <person name="Semple C.A."/>
            <person name="Seno S."/>
            <person name="Sessa L."/>
            <person name="Sheng Y."/>
            <person name="Shibata Y."/>
            <person name="Shimada H."/>
            <person name="Shimada K."/>
            <person name="Silva D."/>
            <person name="Sinclair B."/>
            <person name="Sperling S."/>
            <person name="Stupka E."/>
            <person name="Sugiura K."/>
            <person name="Sultana R."/>
            <person name="Takenaka Y."/>
            <person name="Taki K."/>
            <person name="Tammoja K."/>
            <person name="Tan S.L."/>
            <person name="Tang S."/>
            <person name="Taylor M.S."/>
            <person name="Tegner J."/>
            <person name="Teichmann S.A."/>
            <person name="Ueda H.R."/>
            <person name="van Nimwegen E."/>
            <person name="Verardo R."/>
            <person name="Wei C.L."/>
            <person name="Yagi K."/>
            <person name="Yamanishi H."/>
            <person name="Zabarovsky E."/>
            <person name="Zhu S."/>
            <person name="Zimmer A."/>
            <person name="Hide W."/>
            <person name="Bult C."/>
            <person name="Grimmond S.M."/>
            <person name="Teasdale R.D."/>
            <person name="Liu E.T."/>
            <person name="Brusic V."/>
            <person name="Quackenbush J."/>
            <person name="Wahlestedt C."/>
            <person name="Mattick J.S."/>
            <person name="Hume D.A."/>
            <person name="Kai C."/>
            <person name="Sasaki D."/>
            <person name="Tomaru Y."/>
            <person name="Fukuda S."/>
            <person name="Kanamori-Katayama M."/>
            <person name="Suzuki M."/>
            <person name="Aoki J."/>
            <person name="Arakawa T."/>
            <person name="Iida J."/>
            <person name="Imamura K."/>
            <person name="Itoh M."/>
            <person name="Kato T."/>
            <person name="Kawaji H."/>
            <person name="Kawagashira N."/>
            <person name="Kawashima T."/>
            <person name="Kojima M."/>
            <person name="Kondo S."/>
            <person name="Konno H."/>
            <person name="Nakano K."/>
            <person name="Ninomiya N."/>
            <person name="Nishio T."/>
            <person name="Okada M."/>
            <person name="Plessy C."/>
            <person name="Shibata K."/>
            <person name="Shiraki T."/>
            <person name="Suzuki S."/>
            <person name="Tagami M."/>
            <person name="Waki K."/>
            <person name="Watahiki A."/>
            <person name="Okamura-Oho Y."/>
            <person name="Suzuki H."/>
            <person name="Kawai J."/>
            <person name="Hayashizaki Y."/>
        </authorList>
    </citation>
    <scope>NUCLEOTIDE SEQUENCE [LARGE SCALE MRNA] (ISOFORM 1)</scope>
    <source>
        <strain>C57BL/6J</strain>
        <strain>NOD</strain>
        <tissue>Skin</tissue>
        <tissue>Tongue</tissue>
    </source>
</reference>
<reference key="2">
    <citation type="journal article" date="2009" name="PLoS Biol.">
        <title>Lineage-specific biology revealed by a finished genome assembly of the mouse.</title>
        <authorList>
            <person name="Church D.M."/>
            <person name="Goodstadt L."/>
            <person name="Hillier L.W."/>
            <person name="Zody M.C."/>
            <person name="Goldstein S."/>
            <person name="She X."/>
            <person name="Bult C.J."/>
            <person name="Agarwala R."/>
            <person name="Cherry J.L."/>
            <person name="DiCuccio M."/>
            <person name="Hlavina W."/>
            <person name="Kapustin Y."/>
            <person name="Meric P."/>
            <person name="Maglott D."/>
            <person name="Birtle Z."/>
            <person name="Marques A.C."/>
            <person name="Graves T."/>
            <person name="Zhou S."/>
            <person name="Teague B."/>
            <person name="Potamousis K."/>
            <person name="Churas C."/>
            <person name="Place M."/>
            <person name="Herschleb J."/>
            <person name="Runnheim R."/>
            <person name="Forrest D."/>
            <person name="Amos-Landgraf J."/>
            <person name="Schwartz D.C."/>
            <person name="Cheng Z."/>
            <person name="Lindblad-Toh K."/>
            <person name="Eichler E.E."/>
            <person name="Ponting C.P."/>
        </authorList>
    </citation>
    <scope>NUCLEOTIDE SEQUENCE [LARGE SCALE GENOMIC DNA]</scope>
    <source>
        <strain>C57BL/6J</strain>
    </source>
</reference>
<reference key="3">
    <citation type="submission" date="2005-07" db="EMBL/GenBank/DDBJ databases">
        <authorList>
            <person name="Mural R.J."/>
            <person name="Adams M.D."/>
            <person name="Myers E.W."/>
            <person name="Smith H.O."/>
            <person name="Venter J.C."/>
        </authorList>
    </citation>
    <scope>NUCLEOTIDE SEQUENCE [LARGE SCALE GENOMIC DNA]</scope>
</reference>
<reference key="4">
    <citation type="journal article" date="2004" name="Genome Res.">
        <title>The status, quality, and expansion of the NIH full-length cDNA project: the Mammalian Gene Collection (MGC).</title>
        <authorList>
            <consortium name="The MGC Project Team"/>
        </authorList>
    </citation>
    <scope>NUCLEOTIDE SEQUENCE [LARGE SCALE MRNA] (ISOFORM 2)</scope>
    <source>
        <tissue>Salivary gland</tissue>
    </source>
</reference>
<reference key="5">
    <citation type="journal article" date="2010" name="Cell">
        <title>A tissue-specific atlas of mouse protein phosphorylation and expression.</title>
        <authorList>
            <person name="Huttlin E.L."/>
            <person name="Jedrychowski M.P."/>
            <person name="Elias J.E."/>
            <person name="Goswami T."/>
            <person name="Rad R."/>
            <person name="Beausoleil S.A."/>
            <person name="Villen J."/>
            <person name="Haas W."/>
            <person name="Sowa M.E."/>
            <person name="Gygi S.P."/>
        </authorList>
    </citation>
    <scope>PHOSPHORYLATION [LARGE SCALE ANALYSIS] AT SER-266</scope>
    <scope>IDENTIFICATION BY MASS SPECTROMETRY [LARGE SCALE ANALYSIS]</scope>
    <source>
        <tissue>Kidney</tissue>
        <tissue>Testis</tissue>
    </source>
</reference>
<reference key="6">
    <citation type="journal article" date="2014" name="Am. J. Physiol.">
        <title>Functional involvement of RFVT3/SLC52A3 in intestinal riboflavin absorption.</title>
        <authorList>
            <person name="Yoshimatsu H."/>
            <person name="Yonezawa A."/>
            <person name="Yao Y."/>
            <person name="Sugano K."/>
            <person name="Nakagawa S."/>
            <person name="Omura T."/>
            <person name="Matsubara K."/>
        </authorList>
    </citation>
    <scope>TISSUE SPECIFICITY</scope>
</reference>